<name>TRAV_ECOLI</name>
<geneLocation type="plasmid">
    <name>F</name>
</geneLocation>
<gene>
    <name type="primary">traV</name>
    <name type="ordered locus">ECOK12F082</name>
</gene>
<protein>
    <recommendedName>
        <fullName>Protein TraV</fullName>
    </recommendedName>
</protein>
<feature type="signal peptide">
    <location>
        <begin position="1"/>
        <end position="18"/>
    </location>
</feature>
<feature type="chain" id="PRO_0000018209" description="Protein TraV">
    <location>
        <begin position="19"/>
        <end position="171"/>
    </location>
</feature>
<feature type="lipid moiety-binding region" description="N-palmitoyl cysteine" evidence="2">
    <location>
        <position position="19"/>
    </location>
</feature>
<feature type="lipid moiety-binding region" description="S-diacylglycerol cysteine" evidence="1 2">
    <location>
        <position position="19"/>
    </location>
</feature>
<reference key="1">
    <citation type="journal article" date="1994" name="J. Bacteriol.">
        <title>Molecular analysis of the F plasmid traVR region: traV encodes a lipoprotein.</title>
        <authorList>
            <person name="Doran T.J."/>
            <person name="Loh S.M."/>
            <person name="Firth N."/>
            <person name="Skurray R.A."/>
        </authorList>
    </citation>
    <scope>NUCLEOTIDE SEQUENCE [GENOMIC DNA]</scope>
    <scope>DIACYLGLYCEROL AT CYS-19</scope>
    <scope>PALMITOYLATION AT CYS-19</scope>
</reference>
<reference key="2">
    <citation type="journal article" date="1994" name="Microbiol. Rev.">
        <title>Analysis of the sequence and gene products of the transfer region of the F sex factor.</title>
        <authorList>
            <person name="Frost L.S."/>
            <person name="Ippen-Ihler K."/>
            <person name="Skurray R.A."/>
        </authorList>
    </citation>
    <scope>NUCLEOTIDE SEQUENCE [GENOMIC DNA]</scope>
</reference>
<reference key="3">
    <citation type="submission" date="2000-04" db="EMBL/GenBank/DDBJ databases">
        <title>Complete nucleotide sequence of the F plasmid: its implications for organization and diversification of plasmid genomes.</title>
        <authorList>
            <person name="Shimizu H."/>
            <person name="Saitoh Y."/>
            <person name="Suda Y."/>
            <person name="Uehara K."/>
            <person name="Sampei G."/>
            <person name="Mizobuchi K."/>
        </authorList>
    </citation>
    <scope>NUCLEOTIDE SEQUENCE [LARGE SCALE GENOMIC DNA]</scope>
    <source>
        <strain>K12 / CR63</strain>
    </source>
</reference>
<organism>
    <name type="scientific">Escherichia coli (strain K12)</name>
    <dbReference type="NCBI Taxonomy" id="83333"/>
    <lineage>
        <taxon>Bacteria</taxon>
        <taxon>Pseudomonadati</taxon>
        <taxon>Pseudomonadota</taxon>
        <taxon>Gammaproteobacteria</taxon>
        <taxon>Enterobacterales</taxon>
        <taxon>Enterobacteriaceae</taxon>
        <taxon>Escherichia</taxon>
    </lineage>
</organism>
<keyword id="KW-0998">Cell outer membrane</keyword>
<keyword id="KW-0184">Conjugation</keyword>
<keyword id="KW-0449">Lipoprotein</keyword>
<keyword id="KW-0472">Membrane</keyword>
<keyword id="KW-0564">Palmitate</keyword>
<keyword id="KW-0614">Plasmid</keyword>
<keyword id="KW-0732">Signal</keyword>
<sequence>MKQTSFFIPLLGTLLLYGCAGTSTEFECNATTSDTCMTMEQANEKAKKLERSSEAKPVAASLPRLAEGNFRTMPVQTVTATTPSGSRPAVTAHPEQKLLAPRPLFTAAREVKTVVPVSSVTPVTPPRPLRTGEQTAALWIAPYIDNQDVYHQPSSVFFVIKPSAWGKPRIN</sequence>
<accession>P41069</accession>
<proteinExistence type="evidence at protein level"/>
<dbReference type="EMBL" id="U01159">
    <property type="protein sequence ID" value="AAC44199.1"/>
    <property type="molecule type" value="Genomic_DNA"/>
</dbReference>
<dbReference type="EMBL" id="AP001918">
    <property type="protein sequence ID" value="BAA97952.1"/>
    <property type="molecule type" value="Genomic_DNA"/>
</dbReference>
<dbReference type="RefSeq" id="NP_061461.1">
    <property type="nucleotide sequence ID" value="NC_002483.1"/>
</dbReference>
<dbReference type="RefSeq" id="WP_010892541.1">
    <property type="nucleotide sequence ID" value="NC_002483.1"/>
</dbReference>
<dbReference type="SMR" id="P41069"/>
<dbReference type="DIP" id="DIP-16927N"/>
<dbReference type="KEGG" id="ecoc:C3026_24515"/>
<dbReference type="PATRIC" id="fig|83333.107.peg.631"/>
<dbReference type="OrthoDB" id="6539313at2"/>
<dbReference type="PRO" id="PR:P41069"/>
<dbReference type="GO" id="GO:0009279">
    <property type="term" value="C:cell outer membrane"/>
    <property type="evidence" value="ECO:0007669"/>
    <property type="project" value="UniProtKB-SubCell"/>
</dbReference>
<dbReference type="InterPro" id="IPR014118">
    <property type="entry name" value="T4SS_TraV"/>
</dbReference>
<dbReference type="NCBIfam" id="NF010293">
    <property type="entry name" value="PRK13733.1"/>
    <property type="match status" value="1"/>
</dbReference>
<dbReference type="NCBIfam" id="TIGR02747">
    <property type="entry name" value="TraV"/>
    <property type="match status" value="1"/>
</dbReference>
<dbReference type="Pfam" id="PF09676">
    <property type="entry name" value="TraV"/>
    <property type="match status" value="1"/>
</dbReference>
<dbReference type="PROSITE" id="PS51257">
    <property type="entry name" value="PROKAR_LIPOPROTEIN"/>
    <property type="match status" value="1"/>
</dbReference>
<comment type="function">
    <text>Involved in F pilus assembly. Appears to facilitate the polymerization of inner membrane-located pilin subunits into extracellular F pilus filaments.</text>
</comment>
<comment type="subcellular location">
    <subcellularLocation>
        <location>Cell outer membrane</location>
        <topology>Lipid-anchor</topology>
    </subcellularLocation>
</comment>
<evidence type="ECO:0000255" key="1">
    <source>
        <dbReference type="PROSITE-ProRule" id="PRU00303"/>
    </source>
</evidence>
<evidence type="ECO:0000269" key="2">
    <source>
    </source>
</evidence>